<gene>
    <name evidence="1" type="primary">rsmG</name>
    <name type="ordered locus">Reut_A3356</name>
</gene>
<protein>
    <recommendedName>
        <fullName evidence="1">Ribosomal RNA small subunit methyltransferase G</fullName>
        <ecNumber evidence="1">2.1.1.170</ecNumber>
    </recommendedName>
    <alternativeName>
        <fullName evidence="1">16S rRNA 7-methylguanosine methyltransferase</fullName>
        <shortName evidence="1">16S rRNA m7G methyltransferase</shortName>
    </alternativeName>
</protein>
<sequence length="235" mass="25466">MGGQRHTMIDDAAQRRRLEAGLAEIGLALPPDRIDTLFAYLALLRKWNGVYNLTAIRHPDEMLTHHLLDSLAAVPALAEMARSSEVGGAARGRVLDVGSGGGMPGLPLAISCPDVSVLMVDIVQKKTAFLTQCRAQLGLSNAAAHWGPVERLEDPDKFAVITSRAFAELTDFVNLSGHLLAPHGRLIAMKGVYPQAELDRMEAAGLMAAWQVEEVRRLTVPGLDAERHLVLLSRK</sequence>
<reference key="1">
    <citation type="journal article" date="2010" name="PLoS ONE">
        <title>The complete multipartite genome sequence of Cupriavidus necator JMP134, a versatile pollutant degrader.</title>
        <authorList>
            <person name="Lykidis A."/>
            <person name="Perez-Pantoja D."/>
            <person name="Ledger T."/>
            <person name="Mavromatis K."/>
            <person name="Anderson I.J."/>
            <person name="Ivanova N.N."/>
            <person name="Hooper S.D."/>
            <person name="Lapidus A."/>
            <person name="Lucas S."/>
            <person name="Gonzalez B."/>
            <person name="Kyrpides N.C."/>
        </authorList>
    </citation>
    <scope>NUCLEOTIDE SEQUENCE [LARGE SCALE GENOMIC DNA]</scope>
    <source>
        <strain>JMP134 / LMG 1197</strain>
    </source>
</reference>
<dbReference type="EC" id="2.1.1.170" evidence="1"/>
<dbReference type="EMBL" id="CP000090">
    <property type="protein sequence ID" value="AAZ62714.1"/>
    <property type="molecule type" value="Genomic_DNA"/>
</dbReference>
<dbReference type="SMR" id="Q46VX0"/>
<dbReference type="STRING" id="264198.Reut_A3356"/>
<dbReference type="KEGG" id="reu:Reut_A3356"/>
<dbReference type="eggNOG" id="COG0357">
    <property type="taxonomic scope" value="Bacteria"/>
</dbReference>
<dbReference type="HOGENOM" id="CLU_065341_2_0_4"/>
<dbReference type="OrthoDB" id="9808773at2"/>
<dbReference type="GO" id="GO:0005829">
    <property type="term" value="C:cytosol"/>
    <property type="evidence" value="ECO:0007669"/>
    <property type="project" value="TreeGrafter"/>
</dbReference>
<dbReference type="GO" id="GO:0070043">
    <property type="term" value="F:rRNA (guanine-N7-)-methyltransferase activity"/>
    <property type="evidence" value="ECO:0007669"/>
    <property type="project" value="UniProtKB-UniRule"/>
</dbReference>
<dbReference type="Gene3D" id="3.40.50.150">
    <property type="entry name" value="Vaccinia Virus protein VP39"/>
    <property type="match status" value="1"/>
</dbReference>
<dbReference type="HAMAP" id="MF_00074">
    <property type="entry name" value="16SrRNA_methyltr_G"/>
    <property type="match status" value="1"/>
</dbReference>
<dbReference type="InterPro" id="IPR003682">
    <property type="entry name" value="rRNA_ssu_MeTfrase_G"/>
</dbReference>
<dbReference type="InterPro" id="IPR029063">
    <property type="entry name" value="SAM-dependent_MTases_sf"/>
</dbReference>
<dbReference type="NCBIfam" id="TIGR00138">
    <property type="entry name" value="rsmG_gidB"/>
    <property type="match status" value="1"/>
</dbReference>
<dbReference type="PANTHER" id="PTHR31760">
    <property type="entry name" value="S-ADENOSYL-L-METHIONINE-DEPENDENT METHYLTRANSFERASES SUPERFAMILY PROTEIN"/>
    <property type="match status" value="1"/>
</dbReference>
<dbReference type="PANTHER" id="PTHR31760:SF0">
    <property type="entry name" value="S-ADENOSYL-L-METHIONINE-DEPENDENT METHYLTRANSFERASES SUPERFAMILY PROTEIN"/>
    <property type="match status" value="1"/>
</dbReference>
<dbReference type="Pfam" id="PF02527">
    <property type="entry name" value="GidB"/>
    <property type="match status" value="1"/>
</dbReference>
<dbReference type="PIRSF" id="PIRSF003078">
    <property type="entry name" value="GidB"/>
    <property type="match status" value="1"/>
</dbReference>
<dbReference type="SUPFAM" id="SSF53335">
    <property type="entry name" value="S-adenosyl-L-methionine-dependent methyltransferases"/>
    <property type="match status" value="1"/>
</dbReference>
<name>RSMG_CUPPJ</name>
<comment type="function">
    <text evidence="1">Specifically methylates the N7 position of guanine in position 527 of 16S rRNA.</text>
</comment>
<comment type="catalytic activity">
    <reaction evidence="1">
        <text>guanosine(527) in 16S rRNA + S-adenosyl-L-methionine = N(7)-methylguanosine(527) in 16S rRNA + S-adenosyl-L-homocysteine</text>
        <dbReference type="Rhea" id="RHEA:42732"/>
        <dbReference type="Rhea" id="RHEA-COMP:10209"/>
        <dbReference type="Rhea" id="RHEA-COMP:10210"/>
        <dbReference type="ChEBI" id="CHEBI:57856"/>
        <dbReference type="ChEBI" id="CHEBI:59789"/>
        <dbReference type="ChEBI" id="CHEBI:74269"/>
        <dbReference type="ChEBI" id="CHEBI:74480"/>
        <dbReference type="EC" id="2.1.1.170"/>
    </reaction>
</comment>
<comment type="subcellular location">
    <subcellularLocation>
        <location evidence="1">Cytoplasm</location>
    </subcellularLocation>
</comment>
<comment type="similarity">
    <text evidence="1">Belongs to the methyltransferase superfamily. RNA methyltransferase RsmG family.</text>
</comment>
<keyword id="KW-0963">Cytoplasm</keyword>
<keyword id="KW-0489">Methyltransferase</keyword>
<keyword id="KW-0698">rRNA processing</keyword>
<keyword id="KW-0949">S-adenosyl-L-methionine</keyword>
<keyword id="KW-0808">Transferase</keyword>
<proteinExistence type="inferred from homology"/>
<organism>
    <name type="scientific">Cupriavidus pinatubonensis (strain JMP 134 / LMG 1197)</name>
    <name type="common">Cupriavidus necator (strain JMP 134)</name>
    <dbReference type="NCBI Taxonomy" id="264198"/>
    <lineage>
        <taxon>Bacteria</taxon>
        <taxon>Pseudomonadati</taxon>
        <taxon>Pseudomonadota</taxon>
        <taxon>Betaproteobacteria</taxon>
        <taxon>Burkholderiales</taxon>
        <taxon>Burkholderiaceae</taxon>
        <taxon>Cupriavidus</taxon>
    </lineage>
</organism>
<feature type="chain" id="PRO_0000335408" description="Ribosomal RNA small subunit methyltransferase G">
    <location>
        <begin position="1"/>
        <end position="235"/>
    </location>
</feature>
<feature type="binding site" evidence="1">
    <location>
        <position position="98"/>
    </location>
    <ligand>
        <name>S-adenosyl-L-methionine</name>
        <dbReference type="ChEBI" id="CHEBI:59789"/>
    </ligand>
</feature>
<feature type="binding site" evidence="1">
    <location>
        <position position="103"/>
    </location>
    <ligand>
        <name>S-adenosyl-L-methionine</name>
        <dbReference type="ChEBI" id="CHEBI:59789"/>
    </ligand>
</feature>
<feature type="binding site" evidence="1">
    <location>
        <begin position="149"/>
        <end position="150"/>
    </location>
    <ligand>
        <name>S-adenosyl-L-methionine</name>
        <dbReference type="ChEBI" id="CHEBI:59789"/>
    </ligand>
</feature>
<feature type="binding site" evidence="1">
    <location>
        <position position="164"/>
    </location>
    <ligand>
        <name>S-adenosyl-L-methionine</name>
        <dbReference type="ChEBI" id="CHEBI:59789"/>
    </ligand>
</feature>
<accession>Q46VX0</accession>
<evidence type="ECO:0000255" key="1">
    <source>
        <dbReference type="HAMAP-Rule" id="MF_00074"/>
    </source>
</evidence>